<organism>
    <name type="scientific">Lycodichthys dearborni</name>
    <name type="common">Antarctic eelpout</name>
    <name type="synonym">Rhigophila dearborni</name>
    <dbReference type="NCBI Taxonomy" id="8201"/>
    <lineage>
        <taxon>Eukaryota</taxon>
        <taxon>Metazoa</taxon>
        <taxon>Chordata</taxon>
        <taxon>Craniata</taxon>
        <taxon>Vertebrata</taxon>
        <taxon>Euteleostomi</taxon>
        <taxon>Actinopterygii</taxon>
        <taxon>Neopterygii</taxon>
        <taxon>Teleostei</taxon>
        <taxon>Neoteleostei</taxon>
        <taxon>Acanthomorphata</taxon>
        <taxon>Eupercaria</taxon>
        <taxon>Perciformes</taxon>
        <taxon>Cottioidei</taxon>
        <taxon>Zoarcales</taxon>
        <taxon>Zoarcidae</taxon>
        <taxon>Lycodinae</taxon>
        <taxon>Lycodichthys</taxon>
    </lineage>
</organism>
<protein>
    <recommendedName>
        <fullName>Ice-structuring protein RD2</fullName>
        <shortName>ISP RD2</shortName>
    </recommendedName>
    <alternativeName>
        <fullName>Antifreeze peptide RD2</fullName>
    </alternativeName>
</protein>
<comment type="function">
    <text evidence="1">Contributes to protect fish blood from freezing at subzero sea water temperatures. Lowers the blood freezing point. Binds to nascent ice crystals and prevents further growth (By similarity).</text>
</comment>
<comment type="subcellular location">
    <subcellularLocation>
        <location evidence="3">Secreted</location>
    </subcellularLocation>
</comment>
<comment type="tissue specificity">
    <text evidence="3">Detected in blood serum (at protein level).</text>
</comment>
<comment type="similarity">
    <text evidence="4">Belongs to the type-III AFP family.</text>
</comment>
<evidence type="ECO:0000250" key="1"/>
<evidence type="ECO:0000255" key="2">
    <source>
        <dbReference type="PROSITE-ProRule" id="PRU00021"/>
    </source>
</evidence>
<evidence type="ECO:0000269" key="3">
    <source>
    </source>
</evidence>
<evidence type="ECO:0000305" key="4"/>
<accession>P12102</accession>
<accession>P35752</accession>
<keyword id="KW-0047">Antifreeze protein</keyword>
<keyword id="KW-0903">Direct protein sequencing</keyword>
<keyword id="KW-0964">Secreted</keyword>
<feature type="chain" id="PRO_0000155152" description="Ice-structuring protein RD2">
    <location>
        <begin position="1"/>
        <end position="64"/>
    </location>
</feature>
<feature type="domain" description="AFP-like" evidence="2">
    <location>
        <begin position="4"/>
        <end position="63"/>
    </location>
</feature>
<feature type="site" description="Important for ice-binding" evidence="1">
    <location>
        <position position="9"/>
    </location>
</feature>
<feature type="site" description="Important for ice-binding" evidence="1">
    <location>
        <position position="14"/>
    </location>
</feature>
<feature type="site" description="Important for ice-binding" evidence="1">
    <location>
        <position position="18"/>
    </location>
</feature>
<feature type="site" description="Important for ice-binding" evidence="1">
    <location>
        <position position="44"/>
    </location>
</feature>
<reference key="1">
    <citation type="journal article" date="1995" name="Biochim. Biophys. Acta">
        <title>Antifreeze peptide heterogeneity in an antarctic eel pout includes an unusually large major variant comprised of two 7 kDa type III AFPs linked in tandem.</title>
        <authorList>
            <person name="Wang X."/>
            <person name="Devries A.L."/>
            <person name="Cheng C.-H.C."/>
        </authorList>
    </citation>
    <scope>PROTEIN SEQUENCE</scope>
    <scope>SUBCELLULAR LOCATION</scope>
    <scope>TISSUE SPECIFICITY</scope>
</reference>
<reference key="2">
    <citation type="journal article" date="1987" name="Biochim. Biophys. Acta">
        <title>Primary and secondary structure of antifreeze peptides from arctic and antarctic zoarcid fishes.</title>
        <authorList>
            <person name="Schrag J.D."/>
            <person name="Cheng C.-H.C."/>
            <person name="Panico M."/>
            <person name="Morris H.R."/>
            <person name="Devries A.L."/>
        </authorList>
    </citation>
    <scope>PROTEIN SEQUENCE</scope>
</reference>
<sequence length="64" mass="6934">NKASVVANQLIPINTALTLIMMKAEVVTPMGIPAEDIPRIIGMQVNRAVPLGTTLMPDMVKNYE</sequence>
<proteinExistence type="evidence at protein level"/>
<dbReference type="PIR" id="S08561">
    <property type="entry name" value="FDFIRE"/>
</dbReference>
<dbReference type="SMR" id="P12102"/>
<dbReference type="GO" id="GO:0005576">
    <property type="term" value="C:extracellular region"/>
    <property type="evidence" value="ECO:0007669"/>
    <property type="project" value="UniProtKB-SubCell"/>
</dbReference>
<dbReference type="CDD" id="cd11617">
    <property type="entry name" value="Antifreeze_III"/>
    <property type="match status" value="1"/>
</dbReference>
<dbReference type="Gene3D" id="3.90.1210.10">
    <property type="entry name" value="Antifreeze-like/N-acetylneuraminic acid synthase C-terminal domain"/>
    <property type="match status" value="1"/>
</dbReference>
<dbReference type="InterPro" id="IPR006190">
    <property type="entry name" value="AFP_Neu5c_C"/>
</dbReference>
<dbReference type="InterPro" id="IPR036732">
    <property type="entry name" value="AFP_Neu5c_C_sf"/>
</dbReference>
<dbReference type="InterPro" id="IPR006013">
    <property type="entry name" value="Antifreeze_III"/>
</dbReference>
<dbReference type="InterPro" id="IPR013974">
    <property type="entry name" value="SAF"/>
</dbReference>
<dbReference type="Pfam" id="PF08666">
    <property type="entry name" value="SAF"/>
    <property type="match status" value="1"/>
</dbReference>
<dbReference type="PRINTS" id="PR00357">
    <property type="entry name" value="ANTIFREEZIII"/>
</dbReference>
<dbReference type="SUPFAM" id="SSF51269">
    <property type="entry name" value="AFP III-like domain"/>
    <property type="match status" value="1"/>
</dbReference>
<dbReference type="PROSITE" id="PS50844">
    <property type="entry name" value="AFP_LIKE"/>
    <property type="match status" value="1"/>
</dbReference>
<name>ANP2_LYCDA</name>